<organism>
    <name type="scientific">Xanthomonas oryzae pv. oryzae (strain PXO99A)</name>
    <dbReference type="NCBI Taxonomy" id="360094"/>
    <lineage>
        <taxon>Bacteria</taxon>
        <taxon>Pseudomonadati</taxon>
        <taxon>Pseudomonadota</taxon>
        <taxon>Gammaproteobacteria</taxon>
        <taxon>Lysobacterales</taxon>
        <taxon>Lysobacteraceae</taxon>
        <taxon>Xanthomonas</taxon>
    </lineage>
</organism>
<feature type="chain" id="PRO_1000186903" description="Formate-dependent phosphoribosylglycinamide formyltransferase">
    <location>
        <begin position="1"/>
        <end position="400"/>
    </location>
</feature>
<feature type="domain" description="ATP-grasp" evidence="1">
    <location>
        <begin position="120"/>
        <end position="309"/>
    </location>
</feature>
<feature type="binding site" evidence="1">
    <location>
        <begin position="22"/>
        <end position="23"/>
    </location>
    <ligand>
        <name>N(1)-(5-phospho-beta-D-ribosyl)glycinamide</name>
        <dbReference type="ChEBI" id="CHEBI:143788"/>
    </ligand>
</feature>
<feature type="binding site" evidence="1">
    <location>
        <position position="82"/>
    </location>
    <ligand>
        <name>N(1)-(5-phospho-beta-D-ribosyl)glycinamide</name>
        <dbReference type="ChEBI" id="CHEBI:143788"/>
    </ligand>
</feature>
<feature type="binding site" evidence="1">
    <location>
        <position position="115"/>
    </location>
    <ligand>
        <name>ATP</name>
        <dbReference type="ChEBI" id="CHEBI:30616"/>
    </ligand>
</feature>
<feature type="binding site" evidence="1">
    <location>
        <position position="156"/>
    </location>
    <ligand>
        <name>ATP</name>
        <dbReference type="ChEBI" id="CHEBI:30616"/>
    </ligand>
</feature>
<feature type="binding site" evidence="1">
    <location>
        <begin position="161"/>
        <end position="166"/>
    </location>
    <ligand>
        <name>ATP</name>
        <dbReference type="ChEBI" id="CHEBI:30616"/>
    </ligand>
</feature>
<feature type="binding site" evidence="1">
    <location>
        <begin position="196"/>
        <end position="199"/>
    </location>
    <ligand>
        <name>ATP</name>
        <dbReference type="ChEBI" id="CHEBI:30616"/>
    </ligand>
</feature>
<feature type="binding site" evidence="1">
    <location>
        <position position="204"/>
    </location>
    <ligand>
        <name>ATP</name>
        <dbReference type="ChEBI" id="CHEBI:30616"/>
    </ligand>
</feature>
<feature type="binding site" evidence="1">
    <location>
        <position position="268"/>
    </location>
    <ligand>
        <name>Mg(2+)</name>
        <dbReference type="ChEBI" id="CHEBI:18420"/>
    </ligand>
</feature>
<feature type="binding site" evidence="1">
    <location>
        <position position="280"/>
    </location>
    <ligand>
        <name>Mg(2+)</name>
        <dbReference type="ChEBI" id="CHEBI:18420"/>
    </ligand>
</feature>
<feature type="binding site" evidence="1">
    <location>
        <position position="287"/>
    </location>
    <ligand>
        <name>N(1)-(5-phospho-beta-D-ribosyl)glycinamide</name>
        <dbReference type="ChEBI" id="CHEBI:143788"/>
    </ligand>
</feature>
<feature type="binding site" evidence="1">
    <location>
        <position position="361"/>
    </location>
    <ligand>
        <name>N(1)-(5-phospho-beta-D-ribosyl)glycinamide</name>
        <dbReference type="ChEBI" id="CHEBI:143788"/>
    </ligand>
</feature>
<feature type="binding site" evidence="1">
    <location>
        <begin position="368"/>
        <end position="369"/>
    </location>
    <ligand>
        <name>N(1)-(5-phospho-beta-D-ribosyl)glycinamide</name>
        <dbReference type="ChEBI" id="CHEBI:143788"/>
    </ligand>
</feature>
<proteinExistence type="inferred from homology"/>
<sequence>MTTLGTPLSPSATRVLLLGSGELGKEVAIELQRFGVEVIAADRYANAPAMQVAHRSHVLDMLDPAALRVLIASERPHVIVPEIEAIHTETLVALEREQGQKVIPAARAARLTMDREGIRRLAAETLGLPTSPYRFVDTAADYREAIAAVGLPCVVKPVMSSSGKGQSTLRSEADIDAAWEYAQTGGRAGAGRCIVEGFIDFDYEITLLTVRHAGGTSYCDPIGHWQQDGDYRESWQPQPMSAAALRRSQEIAKAITDDLGGWGLFGVELFVKGDEVWFSEVSPRPHDTGLVTLVSQELSEFALHARAILGLPVGAEDGGVIGQSGPSASCALLAHGNGVPVFDNVADALRDPDTALRLFGKPRVDGHRRVGVTLARADSIDAAREKARVAAAALGIQLTA</sequence>
<accession>B2SRI5</accession>
<evidence type="ECO:0000255" key="1">
    <source>
        <dbReference type="HAMAP-Rule" id="MF_01643"/>
    </source>
</evidence>
<keyword id="KW-0067">ATP-binding</keyword>
<keyword id="KW-0436">Ligase</keyword>
<keyword id="KW-0460">Magnesium</keyword>
<keyword id="KW-0479">Metal-binding</keyword>
<keyword id="KW-0547">Nucleotide-binding</keyword>
<keyword id="KW-0658">Purine biosynthesis</keyword>
<comment type="function">
    <text evidence="1">Involved in the de novo purine biosynthesis. Catalyzes the transfer of formate to 5-phospho-ribosyl-glycinamide (GAR), producing 5-phospho-ribosyl-N-formylglycinamide (FGAR). Formate is provided by PurU via hydrolysis of 10-formyl-tetrahydrofolate.</text>
</comment>
<comment type="catalytic activity">
    <reaction evidence="1">
        <text>N(1)-(5-phospho-beta-D-ribosyl)glycinamide + formate + ATP = N(2)-formyl-N(1)-(5-phospho-beta-D-ribosyl)glycinamide + ADP + phosphate + H(+)</text>
        <dbReference type="Rhea" id="RHEA:24829"/>
        <dbReference type="ChEBI" id="CHEBI:15378"/>
        <dbReference type="ChEBI" id="CHEBI:15740"/>
        <dbReference type="ChEBI" id="CHEBI:30616"/>
        <dbReference type="ChEBI" id="CHEBI:43474"/>
        <dbReference type="ChEBI" id="CHEBI:143788"/>
        <dbReference type="ChEBI" id="CHEBI:147286"/>
        <dbReference type="ChEBI" id="CHEBI:456216"/>
        <dbReference type="EC" id="6.3.1.21"/>
    </reaction>
    <physiologicalReaction direction="left-to-right" evidence="1">
        <dbReference type="Rhea" id="RHEA:24830"/>
    </physiologicalReaction>
</comment>
<comment type="pathway">
    <text evidence="1">Purine metabolism; IMP biosynthesis via de novo pathway; N(2)-formyl-N(1)-(5-phospho-D-ribosyl)glycinamide from N(1)-(5-phospho-D-ribosyl)glycinamide (formate route): step 1/1.</text>
</comment>
<comment type="subunit">
    <text evidence="1">Homodimer.</text>
</comment>
<comment type="similarity">
    <text evidence="1">Belongs to the PurK/PurT family.</text>
</comment>
<dbReference type="EC" id="6.3.1.21" evidence="1"/>
<dbReference type="EMBL" id="CP000967">
    <property type="protein sequence ID" value="ACD57954.1"/>
    <property type="molecule type" value="Genomic_DNA"/>
</dbReference>
<dbReference type="RefSeq" id="WP_012444323.1">
    <property type="nucleotide sequence ID" value="NC_010717.2"/>
</dbReference>
<dbReference type="SMR" id="B2SRI5"/>
<dbReference type="KEGG" id="xop:PXO_04451"/>
<dbReference type="eggNOG" id="COG0027">
    <property type="taxonomic scope" value="Bacteria"/>
</dbReference>
<dbReference type="HOGENOM" id="CLU_011534_1_3_6"/>
<dbReference type="UniPathway" id="UPA00074">
    <property type="reaction ID" value="UER00127"/>
</dbReference>
<dbReference type="Proteomes" id="UP000001740">
    <property type="component" value="Chromosome"/>
</dbReference>
<dbReference type="GO" id="GO:0005829">
    <property type="term" value="C:cytosol"/>
    <property type="evidence" value="ECO:0007669"/>
    <property type="project" value="TreeGrafter"/>
</dbReference>
<dbReference type="GO" id="GO:0005524">
    <property type="term" value="F:ATP binding"/>
    <property type="evidence" value="ECO:0007669"/>
    <property type="project" value="UniProtKB-UniRule"/>
</dbReference>
<dbReference type="GO" id="GO:0000287">
    <property type="term" value="F:magnesium ion binding"/>
    <property type="evidence" value="ECO:0007669"/>
    <property type="project" value="InterPro"/>
</dbReference>
<dbReference type="GO" id="GO:0043815">
    <property type="term" value="F:phosphoribosylglycinamide formyltransferase 2 activity"/>
    <property type="evidence" value="ECO:0007669"/>
    <property type="project" value="UniProtKB-UniRule"/>
</dbReference>
<dbReference type="GO" id="GO:0004644">
    <property type="term" value="F:phosphoribosylglycinamide formyltransferase activity"/>
    <property type="evidence" value="ECO:0007669"/>
    <property type="project" value="InterPro"/>
</dbReference>
<dbReference type="GO" id="GO:0006189">
    <property type="term" value="P:'de novo' IMP biosynthetic process"/>
    <property type="evidence" value="ECO:0007669"/>
    <property type="project" value="UniProtKB-UniRule"/>
</dbReference>
<dbReference type="FunFam" id="3.30.1490.20:FF:000013">
    <property type="entry name" value="Formate-dependent phosphoribosylglycinamide formyltransferase"/>
    <property type="match status" value="1"/>
</dbReference>
<dbReference type="FunFam" id="3.30.470.20:FF:000027">
    <property type="entry name" value="Formate-dependent phosphoribosylglycinamide formyltransferase"/>
    <property type="match status" value="1"/>
</dbReference>
<dbReference type="FunFam" id="3.40.50.20:FF:000007">
    <property type="entry name" value="Formate-dependent phosphoribosylglycinamide formyltransferase"/>
    <property type="match status" value="1"/>
</dbReference>
<dbReference type="Gene3D" id="3.40.50.20">
    <property type="match status" value="1"/>
</dbReference>
<dbReference type="Gene3D" id="3.30.1490.20">
    <property type="entry name" value="ATP-grasp fold, A domain"/>
    <property type="match status" value="1"/>
</dbReference>
<dbReference type="Gene3D" id="3.30.470.20">
    <property type="entry name" value="ATP-grasp fold, B domain"/>
    <property type="match status" value="1"/>
</dbReference>
<dbReference type="HAMAP" id="MF_01643">
    <property type="entry name" value="PurT"/>
    <property type="match status" value="1"/>
</dbReference>
<dbReference type="InterPro" id="IPR011761">
    <property type="entry name" value="ATP-grasp"/>
</dbReference>
<dbReference type="InterPro" id="IPR003135">
    <property type="entry name" value="ATP-grasp_carboxylate-amine"/>
</dbReference>
<dbReference type="InterPro" id="IPR013815">
    <property type="entry name" value="ATP_grasp_subdomain_1"/>
</dbReference>
<dbReference type="InterPro" id="IPR016185">
    <property type="entry name" value="PreATP-grasp_dom_sf"/>
</dbReference>
<dbReference type="InterPro" id="IPR005862">
    <property type="entry name" value="PurT"/>
</dbReference>
<dbReference type="InterPro" id="IPR054350">
    <property type="entry name" value="PurT/PurK_preATP-grasp"/>
</dbReference>
<dbReference type="InterPro" id="IPR048740">
    <property type="entry name" value="PurT_C"/>
</dbReference>
<dbReference type="InterPro" id="IPR011054">
    <property type="entry name" value="Rudment_hybrid_motif"/>
</dbReference>
<dbReference type="NCBIfam" id="NF006766">
    <property type="entry name" value="PRK09288.1"/>
    <property type="match status" value="1"/>
</dbReference>
<dbReference type="NCBIfam" id="TIGR01142">
    <property type="entry name" value="purT"/>
    <property type="match status" value="1"/>
</dbReference>
<dbReference type="PANTHER" id="PTHR43055">
    <property type="entry name" value="FORMATE-DEPENDENT PHOSPHORIBOSYLGLYCINAMIDE FORMYLTRANSFERASE"/>
    <property type="match status" value="1"/>
</dbReference>
<dbReference type="PANTHER" id="PTHR43055:SF1">
    <property type="entry name" value="FORMATE-DEPENDENT PHOSPHORIBOSYLGLYCINAMIDE FORMYLTRANSFERASE"/>
    <property type="match status" value="1"/>
</dbReference>
<dbReference type="Pfam" id="PF02222">
    <property type="entry name" value="ATP-grasp"/>
    <property type="match status" value="1"/>
</dbReference>
<dbReference type="Pfam" id="PF21244">
    <property type="entry name" value="PurT_C"/>
    <property type="match status" value="1"/>
</dbReference>
<dbReference type="Pfam" id="PF22660">
    <property type="entry name" value="RS_preATP-grasp-like"/>
    <property type="match status" value="1"/>
</dbReference>
<dbReference type="SUPFAM" id="SSF56059">
    <property type="entry name" value="Glutathione synthetase ATP-binding domain-like"/>
    <property type="match status" value="1"/>
</dbReference>
<dbReference type="SUPFAM" id="SSF52440">
    <property type="entry name" value="PreATP-grasp domain"/>
    <property type="match status" value="1"/>
</dbReference>
<dbReference type="SUPFAM" id="SSF51246">
    <property type="entry name" value="Rudiment single hybrid motif"/>
    <property type="match status" value="1"/>
</dbReference>
<dbReference type="PROSITE" id="PS50975">
    <property type="entry name" value="ATP_GRASP"/>
    <property type="match status" value="1"/>
</dbReference>
<name>PURT_XANOP</name>
<protein>
    <recommendedName>
        <fullName evidence="1">Formate-dependent phosphoribosylglycinamide formyltransferase</fullName>
        <ecNumber evidence="1">6.3.1.21</ecNumber>
    </recommendedName>
    <alternativeName>
        <fullName evidence="1">5'-phosphoribosylglycinamide transformylase 2</fullName>
    </alternativeName>
    <alternativeName>
        <fullName evidence="1">Formate-dependent GAR transformylase</fullName>
    </alternativeName>
    <alternativeName>
        <fullName evidence="1">GAR transformylase 2</fullName>
        <shortName evidence="1">GART 2</shortName>
    </alternativeName>
    <alternativeName>
        <fullName evidence="1">Non-folate glycinamide ribonucleotide transformylase</fullName>
    </alternativeName>
    <alternativeName>
        <fullName evidence="1">Phosphoribosylglycinamide formyltransferase 2</fullName>
    </alternativeName>
</protein>
<reference key="1">
    <citation type="journal article" date="2008" name="BMC Genomics">
        <title>Genome sequence and rapid evolution of the rice pathogen Xanthomonas oryzae pv. oryzae PXO99A.</title>
        <authorList>
            <person name="Salzberg S.L."/>
            <person name="Sommer D.D."/>
            <person name="Schatz M.C."/>
            <person name="Phillippy A.M."/>
            <person name="Rabinowicz P.D."/>
            <person name="Tsuge S."/>
            <person name="Furutani A."/>
            <person name="Ochiai H."/>
            <person name="Delcher A.L."/>
            <person name="Kelley D."/>
            <person name="Madupu R."/>
            <person name="Puiu D."/>
            <person name="Radune D."/>
            <person name="Shumway M."/>
            <person name="Trapnell C."/>
            <person name="Aparna G."/>
            <person name="Jha G."/>
            <person name="Pandey A."/>
            <person name="Patil P.B."/>
            <person name="Ishihara H."/>
            <person name="Meyer D.F."/>
            <person name="Szurek B."/>
            <person name="Verdier V."/>
            <person name="Koebnik R."/>
            <person name="Dow J.M."/>
            <person name="Ryan R.P."/>
            <person name="Hirata H."/>
            <person name="Tsuyumu S."/>
            <person name="Won Lee S."/>
            <person name="Seo Y.-S."/>
            <person name="Sriariyanum M."/>
            <person name="Ronald P.C."/>
            <person name="Sonti R.V."/>
            <person name="Van Sluys M.-A."/>
            <person name="Leach J.E."/>
            <person name="White F.F."/>
            <person name="Bogdanove A.J."/>
        </authorList>
    </citation>
    <scope>NUCLEOTIDE SEQUENCE [LARGE SCALE GENOMIC DNA]</scope>
    <source>
        <strain>PXO99A</strain>
    </source>
</reference>
<gene>
    <name evidence="1" type="primary">purT</name>
    <name type="ordered locus">PXO_04451</name>
</gene>